<reference key="1">
    <citation type="journal article" date="1991" name="Biochem. J.">
        <title>A unique charged tyrosine-containing member of the adipokinetic hormone/red-pigment-concentrating hormone peptide family isolated and sequenced from two beetle species.</title>
        <authorList>
            <person name="Gaede G."/>
        </authorList>
    </citation>
    <scope>PROTEIN SEQUENCE</scope>
    <scope>PYROGLUTAMATE FORMATION AT GLN-1</scope>
    <scope>AMIDATION AT TRP-8</scope>
    <scope>SUBCELLULAR LOCATION</scope>
    <source>
        <tissue>Corpora cardiaca</tissue>
    </source>
</reference>
<keyword id="KW-0027">Amidation</keyword>
<keyword id="KW-0903">Direct protein sequencing</keyword>
<keyword id="KW-0286">Flight</keyword>
<keyword id="KW-0372">Hormone</keyword>
<keyword id="KW-0527">Neuropeptide</keyword>
<keyword id="KW-0873">Pyrrolidone carboxylic acid</keyword>
<keyword id="KW-0964">Secreted</keyword>
<accession>P84241</accession>
<accession>P25423</accession>
<comment type="function">
    <text>This hormone, released from cells in the corpora cardiaca, causes release of diglycerides from the fat body and stimulation of muscles to use these diglycerides as an energy source during energy-demanding processes.</text>
</comment>
<comment type="subcellular location">
    <subcellularLocation>
        <location evidence="1">Secreted</location>
    </subcellularLocation>
</comment>
<comment type="similarity">
    <text evidence="2">Belongs to the AKH/HRTH/RPCH family.</text>
</comment>
<name>AKH_ANOSE</name>
<feature type="peptide" id="PRO_0000043418" description="Adipokinetic hormone">
    <location>
        <begin position="1"/>
        <end position="8"/>
    </location>
</feature>
<feature type="modified residue" description="Pyrrolidone carboxylic acid" evidence="1">
    <location>
        <position position="1"/>
    </location>
</feature>
<feature type="modified residue" description="Tryptophan amide" evidence="1">
    <location>
        <position position="8"/>
    </location>
</feature>
<sequence length="8" mass="1022">QLNYSPDW</sequence>
<dbReference type="PIR" id="A58641">
    <property type="entry name" value="A58641"/>
</dbReference>
<dbReference type="GO" id="GO:0005576">
    <property type="term" value="C:extracellular region"/>
    <property type="evidence" value="ECO:0007669"/>
    <property type="project" value="UniProtKB-SubCell"/>
</dbReference>
<dbReference type="GO" id="GO:0005179">
    <property type="term" value="F:hormone activity"/>
    <property type="evidence" value="ECO:0007669"/>
    <property type="project" value="UniProtKB-KW"/>
</dbReference>
<dbReference type="GO" id="GO:0007629">
    <property type="term" value="P:flight behavior"/>
    <property type="evidence" value="ECO:0007669"/>
    <property type="project" value="UniProtKB-KW"/>
</dbReference>
<dbReference type="GO" id="GO:0007218">
    <property type="term" value="P:neuropeptide signaling pathway"/>
    <property type="evidence" value="ECO:0007669"/>
    <property type="project" value="UniProtKB-KW"/>
</dbReference>
<dbReference type="InterPro" id="IPR002047">
    <property type="entry name" value="Adipokinetic_hormone_CS"/>
</dbReference>
<dbReference type="PROSITE" id="PS00256">
    <property type="entry name" value="AKH"/>
    <property type="match status" value="1"/>
</dbReference>
<organism>
    <name type="scientific">Anoplotrupes stercorosus</name>
    <name type="common">Dor beetle</name>
    <name type="synonym">Geotrupes stercorosus</name>
    <dbReference type="NCBI Taxonomy" id="260542"/>
    <lineage>
        <taxon>Eukaryota</taxon>
        <taxon>Metazoa</taxon>
        <taxon>Ecdysozoa</taxon>
        <taxon>Arthropoda</taxon>
        <taxon>Hexapoda</taxon>
        <taxon>Insecta</taxon>
        <taxon>Pterygota</taxon>
        <taxon>Neoptera</taxon>
        <taxon>Endopterygota</taxon>
        <taxon>Coleoptera</taxon>
        <taxon>Polyphaga</taxon>
        <taxon>Scarabaeiformia</taxon>
        <taxon>Geotrupidae</taxon>
        <taxon>Anoplotrupes</taxon>
    </lineage>
</organism>
<evidence type="ECO:0000269" key="1">
    <source>
    </source>
</evidence>
<evidence type="ECO:0000305" key="2"/>
<proteinExistence type="evidence at protein level"/>
<protein>
    <recommendedName>
        <fullName>Adipokinetic hormone</fullName>
        <shortName>AKH</shortName>
    </recommendedName>
</protein>